<accession>B4RB34</accession>
<reference key="1">
    <citation type="journal article" date="2008" name="BMC Genomics">
        <title>Complete genome of Phenylobacterium zucineum - a novel facultative intracellular bacterium isolated from human erythroleukemia cell line K562.</title>
        <authorList>
            <person name="Luo Y."/>
            <person name="Xu X."/>
            <person name="Ding Z."/>
            <person name="Liu Z."/>
            <person name="Zhang B."/>
            <person name="Yan Z."/>
            <person name="Sun J."/>
            <person name="Hu S."/>
            <person name="Hu X."/>
        </authorList>
    </citation>
    <scope>NUCLEOTIDE SEQUENCE [LARGE SCALE GENOMIC DNA]</scope>
    <source>
        <strain>HLK1</strain>
    </source>
</reference>
<comment type="function">
    <text evidence="1">Negatively regulates transcription of bacterial ribonucleotide reductase nrd genes and operons by binding to NrdR-boxes.</text>
</comment>
<comment type="cofactor">
    <cofactor evidence="1">
        <name>Zn(2+)</name>
        <dbReference type="ChEBI" id="CHEBI:29105"/>
    </cofactor>
    <text evidence="1">Binds 1 zinc ion.</text>
</comment>
<comment type="similarity">
    <text evidence="1">Belongs to the NrdR family.</text>
</comment>
<organism>
    <name type="scientific">Phenylobacterium zucineum (strain HLK1)</name>
    <dbReference type="NCBI Taxonomy" id="450851"/>
    <lineage>
        <taxon>Bacteria</taxon>
        <taxon>Pseudomonadati</taxon>
        <taxon>Pseudomonadota</taxon>
        <taxon>Alphaproteobacteria</taxon>
        <taxon>Caulobacterales</taxon>
        <taxon>Caulobacteraceae</taxon>
        <taxon>Phenylobacterium</taxon>
    </lineage>
</organism>
<dbReference type="EMBL" id="CP000747">
    <property type="protein sequence ID" value="ACG78085.1"/>
    <property type="molecule type" value="Genomic_DNA"/>
</dbReference>
<dbReference type="RefSeq" id="WP_012522227.1">
    <property type="nucleotide sequence ID" value="NC_011144.1"/>
</dbReference>
<dbReference type="SMR" id="B4RB34"/>
<dbReference type="STRING" id="450851.PHZ_c1674"/>
<dbReference type="KEGG" id="pzu:PHZ_c1674"/>
<dbReference type="eggNOG" id="COG1327">
    <property type="taxonomic scope" value="Bacteria"/>
</dbReference>
<dbReference type="HOGENOM" id="CLU_108412_0_1_5"/>
<dbReference type="OrthoDB" id="9807461at2"/>
<dbReference type="Proteomes" id="UP000001868">
    <property type="component" value="Chromosome"/>
</dbReference>
<dbReference type="GO" id="GO:0005524">
    <property type="term" value="F:ATP binding"/>
    <property type="evidence" value="ECO:0007669"/>
    <property type="project" value="UniProtKB-KW"/>
</dbReference>
<dbReference type="GO" id="GO:0003677">
    <property type="term" value="F:DNA binding"/>
    <property type="evidence" value="ECO:0007669"/>
    <property type="project" value="UniProtKB-KW"/>
</dbReference>
<dbReference type="GO" id="GO:0008270">
    <property type="term" value="F:zinc ion binding"/>
    <property type="evidence" value="ECO:0007669"/>
    <property type="project" value="UniProtKB-UniRule"/>
</dbReference>
<dbReference type="GO" id="GO:0045892">
    <property type="term" value="P:negative regulation of DNA-templated transcription"/>
    <property type="evidence" value="ECO:0007669"/>
    <property type="project" value="UniProtKB-UniRule"/>
</dbReference>
<dbReference type="HAMAP" id="MF_00440">
    <property type="entry name" value="NrdR"/>
    <property type="match status" value="1"/>
</dbReference>
<dbReference type="InterPro" id="IPR005144">
    <property type="entry name" value="ATP-cone_dom"/>
</dbReference>
<dbReference type="InterPro" id="IPR055173">
    <property type="entry name" value="NrdR-like_N"/>
</dbReference>
<dbReference type="InterPro" id="IPR003796">
    <property type="entry name" value="RNR_NrdR-like"/>
</dbReference>
<dbReference type="NCBIfam" id="TIGR00244">
    <property type="entry name" value="transcriptional regulator NrdR"/>
    <property type="match status" value="1"/>
</dbReference>
<dbReference type="PANTHER" id="PTHR30455">
    <property type="entry name" value="TRANSCRIPTIONAL REPRESSOR NRDR"/>
    <property type="match status" value="1"/>
</dbReference>
<dbReference type="PANTHER" id="PTHR30455:SF2">
    <property type="entry name" value="TRANSCRIPTIONAL REPRESSOR NRDR"/>
    <property type="match status" value="1"/>
</dbReference>
<dbReference type="Pfam" id="PF03477">
    <property type="entry name" value="ATP-cone"/>
    <property type="match status" value="1"/>
</dbReference>
<dbReference type="Pfam" id="PF22811">
    <property type="entry name" value="Zn_ribbon_NrdR"/>
    <property type="match status" value="1"/>
</dbReference>
<dbReference type="PROSITE" id="PS51161">
    <property type="entry name" value="ATP_CONE"/>
    <property type="match status" value="1"/>
</dbReference>
<feature type="chain" id="PRO_1000124529" description="Transcriptional repressor NrdR">
    <location>
        <begin position="1"/>
        <end position="155"/>
    </location>
</feature>
<feature type="domain" description="ATP-cone" evidence="1">
    <location>
        <begin position="49"/>
        <end position="139"/>
    </location>
</feature>
<feature type="zinc finger region" evidence="1">
    <location>
        <begin position="3"/>
        <end position="34"/>
    </location>
</feature>
<feature type="region of interest" description="Disordered" evidence="2">
    <location>
        <begin position="1"/>
        <end position="22"/>
    </location>
</feature>
<feature type="compositionally biased region" description="Basic and acidic residues" evidence="2">
    <location>
        <begin position="7"/>
        <end position="22"/>
    </location>
</feature>
<proteinExistence type="inferred from homology"/>
<sequence length="155" mass="18002">MRCPFCGHDETQVKDSRPSEDGAAIRRRRLCPQCEGRFTTFERVQLREITILKRSGRRTPFDRDKLARSISIALRKRPVEPERIERMISTIVRQLESMGETELPSSTIGELVMKQLKQLDDVAYVRYASVYRDFRETQDFARFLGEEGLSEAAES</sequence>
<name>NRDR_PHEZH</name>
<gene>
    <name evidence="1" type="primary">nrdR</name>
    <name type="ordered locus">PHZ_c1674</name>
</gene>
<evidence type="ECO:0000255" key="1">
    <source>
        <dbReference type="HAMAP-Rule" id="MF_00440"/>
    </source>
</evidence>
<evidence type="ECO:0000256" key="2">
    <source>
        <dbReference type="SAM" id="MobiDB-lite"/>
    </source>
</evidence>
<keyword id="KW-0067">ATP-binding</keyword>
<keyword id="KW-0238">DNA-binding</keyword>
<keyword id="KW-0479">Metal-binding</keyword>
<keyword id="KW-0547">Nucleotide-binding</keyword>
<keyword id="KW-1185">Reference proteome</keyword>
<keyword id="KW-0678">Repressor</keyword>
<keyword id="KW-0804">Transcription</keyword>
<keyword id="KW-0805">Transcription regulation</keyword>
<keyword id="KW-0862">Zinc</keyword>
<keyword id="KW-0863">Zinc-finger</keyword>
<protein>
    <recommendedName>
        <fullName evidence="1">Transcriptional repressor NrdR</fullName>
    </recommendedName>
</protein>